<name>LET4_CAEEL</name>
<sequence length="773" mass="85297">MRLLLCLLLFSTLLINSTNACPGVITQACFCSEVHSGIVLDCSNSSASGILQIIRTNQAQVGLIQSLTMNQAELVELPPNFFSGLFIRRLDLSQNKIKKIDDAAFAGINPVLEEVVLNHNLIEKVPAAALAGLPNLLRLDLSNNSIVEIQEQEIFPNLNKLYDINLGSNKIFSIHTSTFQNVKNSIQTINLGHNNMTAVPSSAIRGLKQLQSLHLHKNRIEQLDALNFLNLPVLNLLNLAGNQIHELNRQAFLNVPSLRYLYLSGNKITKLTAYQFQTFEQLEMLDLTNNEIGAIPANSLSGLKQLRQLYLAHNKISNISSNAFTNSSIVVLVLSSNELKTLTAGIISGLPNLQQVSFRDNQIKTINRNAFYDAASLVMLDLAKNQLTEIAPTTFLAQLNLLLVDLSENKLPKTPYSAFNSRVGTVLLKENPLVCTENLHMLQQGTGVYVRDSPDIICGRKPTPKPEPVLVPIVTDSLISTQRPALVQIPKMQIHRNVHTTTGDQAPQIPSGAFQQIDLGKSRSLPRGHSRFILDKPSTREQSVEPTEELTPIQPIILPSREDEIRQSSMEAGTSQESVEATSQKIPSTTDIIDRPNVVLPFPVPFLKRGPNLSESKKVESTDMPSTSQVFHTLPPSILIEPGSTPKVAQPSTEANIKSEHIDEFALASSNSNEPTLQPRLEKSFFTTTIIFICVGTAVIVLVVVIAGLCISKHRQLQFENTYSDSSAARTSEYISTQYRQNSLRGTGGRVGRFEESPAWIYNPGSSYCNYYK</sequence>
<evidence type="ECO:0000255" key="1"/>
<evidence type="ECO:0000269" key="2">
    <source>
    </source>
</evidence>
<evidence type="ECO:0000305" key="3"/>
<evidence type="ECO:0000312" key="4">
    <source>
        <dbReference type="EMBL" id="AEZ55699.1"/>
    </source>
</evidence>
<evidence type="ECO:0000312" key="5">
    <source>
        <dbReference type="EMBL" id="CAB01864.2"/>
    </source>
</evidence>
<dbReference type="EMBL" id="JQ292907">
    <property type="protein sequence ID" value="AEZ55699.1"/>
    <property type="molecule type" value="mRNA"/>
</dbReference>
<dbReference type="EMBL" id="Z79598">
    <property type="protein sequence ID" value="CAB01864.2"/>
    <property type="molecule type" value="Genomic_DNA"/>
</dbReference>
<dbReference type="RefSeq" id="NP_510425.2">
    <property type="nucleotide sequence ID" value="NM_078024.5"/>
</dbReference>
<dbReference type="SMR" id="Q93373"/>
<dbReference type="FunCoup" id="Q93373">
    <property type="interactions" value="65"/>
</dbReference>
<dbReference type="STRING" id="6239.C44H4.2.1"/>
<dbReference type="PaxDb" id="6239-C44H4.2"/>
<dbReference type="PeptideAtlas" id="Q93373"/>
<dbReference type="EnsemblMetazoa" id="C44H4.2.1">
    <property type="protein sequence ID" value="C44H4.2.1"/>
    <property type="gene ID" value="WBGene00002282"/>
</dbReference>
<dbReference type="GeneID" id="181554"/>
<dbReference type="KEGG" id="cel:CELE_C44H4.2"/>
<dbReference type="AGR" id="WB:WBGene00002282"/>
<dbReference type="CTD" id="181554"/>
<dbReference type="WormBase" id="C44H4.2">
    <property type="protein sequence ID" value="CE43213"/>
    <property type="gene ID" value="WBGene00002282"/>
    <property type="gene designation" value="let-4"/>
</dbReference>
<dbReference type="eggNOG" id="KOG0619">
    <property type="taxonomic scope" value="Eukaryota"/>
</dbReference>
<dbReference type="HOGENOM" id="CLU_358724_0_0_1"/>
<dbReference type="InParanoid" id="Q93373"/>
<dbReference type="OMA" id="VCTENLH"/>
<dbReference type="OrthoDB" id="1055097at2759"/>
<dbReference type="PhylomeDB" id="Q93373"/>
<dbReference type="PRO" id="PR:Q93373"/>
<dbReference type="Proteomes" id="UP000001940">
    <property type="component" value="Chromosome X"/>
</dbReference>
<dbReference type="Bgee" id="WBGene00002282">
    <property type="expression patterns" value="Expressed in embryo and 3 other cell types or tissues"/>
</dbReference>
<dbReference type="GO" id="GO:0045177">
    <property type="term" value="C:apical part of cell"/>
    <property type="evidence" value="ECO:0000314"/>
    <property type="project" value="WormBase"/>
</dbReference>
<dbReference type="GO" id="GO:0016324">
    <property type="term" value="C:apical plasma membrane"/>
    <property type="evidence" value="ECO:0007669"/>
    <property type="project" value="UniProtKB-SubCell"/>
</dbReference>
<dbReference type="GO" id="GO:0009792">
    <property type="term" value="P:embryo development ending in birth or egg hatching"/>
    <property type="evidence" value="ECO:0000315"/>
    <property type="project" value="WormBase"/>
</dbReference>
<dbReference type="GO" id="GO:0002064">
    <property type="term" value="P:epithelial cell development"/>
    <property type="evidence" value="ECO:0000315"/>
    <property type="project" value="WormBase"/>
</dbReference>
<dbReference type="GO" id="GO:0002119">
    <property type="term" value="P:nematode larval development"/>
    <property type="evidence" value="ECO:0000315"/>
    <property type="project" value="WormBase"/>
</dbReference>
<dbReference type="GO" id="GO:1905710">
    <property type="term" value="P:positive regulation of membrane permeability"/>
    <property type="evidence" value="ECO:0000315"/>
    <property type="project" value="UniProtKB"/>
</dbReference>
<dbReference type="GO" id="GO:0035150">
    <property type="term" value="P:regulation of tube size"/>
    <property type="evidence" value="ECO:0000315"/>
    <property type="project" value="WormBase"/>
</dbReference>
<dbReference type="FunFam" id="3.80.10.10:FF:001167">
    <property type="entry name" value="Chaoptin"/>
    <property type="match status" value="1"/>
</dbReference>
<dbReference type="Gene3D" id="3.80.10.10">
    <property type="entry name" value="Ribonuclease Inhibitor"/>
    <property type="match status" value="3"/>
</dbReference>
<dbReference type="InterPro" id="IPR001611">
    <property type="entry name" value="Leu-rich_rpt"/>
</dbReference>
<dbReference type="InterPro" id="IPR003591">
    <property type="entry name" value="Leu-rich_rpt_typical-subtyp"/>
</dbReference>
<dbReference type="InterPro" id="IPR032675">
    <property type="entry name" value="LRR_dom_sf"/>
</dbReference>
<dbReference type="PANTHER" id="PTHR24366">
    <property type="entry name" value="IG(IMMUNOGLOBULIN) AND LRR(LEUCINE RICH REPEAT) DOMAINS"/>
    <property type="match status" value="1"/>
</dbReference>
<dbReference type="PANTHER" id="PTHR24366:SF96">
    <property type="entry name" value="LEUCINE RICH REPEAT CONTAINING 53"/>
    <property type="match status" value="1"/>
</dbReference>
<dbReference type="Pfam" id="PF13855">
    <property type="entry name" value="LRR_8"/>
    <property type="match status" value="4"/>
</dbReference>
<dbReference type="SMART" id="SM00365">
    <property type="entry name" value="LRR_SD22"/>
    <property type="match status" value="5"/>
</dbReference>
<dbReference type="SMART" id="SM00369">
    <property type="entry name" value="LRR_TYP"/>
    <property type="match status" value="14"/>
</dbReference>
<dbReference type="SUPFAM" id="SSF52058">
    <property type="entry name" value="L domain-like"/>
    <property type="match status" value="2"/>
</dbReference>
<dbReference type="PROSITE" id="PS51450">
    <property type="entry name" value="LRR"/>
    <property type="match status" value="14"/>
</dbReference>
<feature type="signal peptide" evidence="1">
    <location>
        <begin position="1"/>
        <end position="20"/>
    </location>
</feature>
<feature type="chain" id="PRO_0000422395" description="Leucine-rich repeat-containing protein let-4" evidence="1">
    <location>
        <begin position="21"/>
        <end position="773"/>
    </location>
</feature>
<feature type="topological domain" description="Extracellular" evidence="1">
    <location>
        <begin position="21"/>
        <end position="689"/>
    </location>
</feature>
<feature type="transmembrane region" description="Helical" evidence="1">
    <location>
        <begin position="690"/>
        <end position="710"/>
    </location>
</feature>
<feature type="topological domain" description="Cytoplasmic" evidence="1">
    <location>
        <begin position="711"/>
        <end position="773"/>
    </location>
</feature>
<feature type="repeat" description="LRR 1" evidence="1">
    <location>
        <begin position="61"/>
        <end position="84"/>
    </location>
</feature>
<feature type="repeat" description="LRR 2" evidence="1">
    <location>
        <begin position="85"/>
        <end position="107"/>
    </location>
</feature>
<feature type="repeat" description="LRR 3" evidence="1">
    <location>
        <begin position="109"/>
        <end position="132"/>
    </location>
</feature>
<feature type="repeat" description="LRR 4" evidence="1">
    <location>
        <begin position="133"/>
        <end position="157"/>
    </location>
</feature>
<feature type="repeat" description="LRR 5" evidence="1">
    <location>
        <begin position="159"/>
        <end position="181"/>
    </location>
</feature>
<feature type="repeat" description="LRR 6" evidence="1">
    <location>
        <begin position="183"/>
        <end position="206"/>
    </location>
</feature>
<feature type="repeat" description="LRR 7" evidence="1">
    <location>
        <begin position="207"/>
        <end position="230"/>
    </location>
</feature>
<feature type="repeat" description="LRR 8" evidence="1">
    <location>
        <begin position="231"/>
        <end position="254"/>
    </location>
</feature>
<feature type="repeat" description="LRR 9" evidence="1">
    <location>
        <begin position="256"/>
        <end position="278"/>
    </location>
</feature>
<feature type="repeat" description="LRR 10" evidence="1">
    <location>
        <begin position="279"/>
        <end position="302"/>
    </location>
</feature>
<feature type="repeat" description="LRR 11" evidence="1">
    <location>
        <begin position="303"/>
        <end position="326"/>
    </location>
</feature>
<feature type="repeat" description="LRR 12" evidence="1">
    <location>
        <begin position="328"/>
        <end position="349"/>
    </location>
</feature>
<feature type="repeat" description="LRR 13" evidence="1">
    <location>
        <begin position="350"/>
        <end position="373"/>
    </location>
</feature>
<feature type="repeat" description="LRR 14" evidence="1">
    <location>
        <begin position="375"/>
        <end position="397"/>
    </location>
</feature>
<feature type="repeat" description="LRR 15" evidence="1">
    <location>
        <begin position="399"/>
        <end position="421"/>
    </location>
</feature>
<feature type="repeat" description="LRR 16" evidence="1">
    <location>
        <begin position="486"/>
        <end position="516"/>
    </location>
</feature>
<protein>
    <recommendedName>
        <fullName>Leucine-rich repeat-containing protein let-4</fullName>
    </recommendedName>
    <alternativeName>
        <fullName>Lethal protein 4</fullName>
    </alternativeName>
</protein>
<accession>Q93373</accession>
<organism>
    <name type="scientific">Caenorhabditis elegans</name>
    <dbReference type="NCBI Taxonomy" id="6239"/>
    <lineage>
        <taxon>Eukaryota</taxon>
        <taxon>Metazoa</taxon>
        <taxon>Ecdysozoa</taxon>
        <taxon>Nematoda</taxon>
        <taxon>Chromadorea</taxon>
        <taxon>Rhabditida</taxon>
        <taxon>Rhabditina</taxon>
        <taxon>Rhabditomorpha</taxon>
        <taxon>Rhabditoidea</taxon>
        <taxon>Rhabditidae</taxon>
        <taxon>Peloderinae</taxon>
        <taxon>Caenorhabditis</taxon>
    </lineage>
</organism>
<keyword id="KW-1003">Cell membrane</keyword>
<keyword id="KW-0433">Leucine-rich repeat</keyword>
<keyword id="KW-0472">Membrane</keyword>
<keyword id="KW-1185">Reference proteome</keyword>
<keyword id="KW-0677">Repeat</keyword>
<keyword id="KW-0732">Signal</keyword>
<keyword id="KW-0812">Transmembrane</keyword>
<keyword id="KW-1133">Transmembrane helix</keyword>
<reference evidence="3 4" key="1">
    <citation type="journal article" date="2012" name="Development">
        <title>Extracellular leucine-rich repeat proteins are required to organize the apical extracellular matrix and maintain epithelial junction integrity in C. elegans.</title>
        <authorList>
            <person name="Mancuso V.P."/>
            <person name="Parry J.M."/>
            <person name="Storer L."/>
            <person name="Poggioli C."/>
            <person name="Nguyen K.C."/>
            <person name="Hall D.H."/>
            <person name="Sundaram M.V."/>
        </authorList>
    </citation>
    <scope>NUCLEOTIDE SEQUENCE [MRNA]</scope>
    <scope>FUNCTION</scope>
    <scope>SUBCELLULAR LOCATION</scope>
    <scope>TISSUE SPECIFICITY</scope>
    <scope>DEVELOPMENTAL STAGE</scope>
    <scope>DISRUPTION PHENOTYPE</scope>
    <source>
        <strain evidence="2">Bristol N2</strain>
    </source>
</reference>
<reference evidence="5" key="2">
    <citation type="journal article" date="1998" name="Science">
        <title>Genome sequence of the nematode C. elegans: a platform for investigating biology.</title>
        <authorList>
            <consortium name="The C. elegans sequencing consortium"/>
        </authorList>
    </citation>
    <scope>NUCLEOTIDE SEQUENCE [LARGE SCALE GENOMIC DNA]</scope>
    <source>
        <strain evidence="5">Bristol N2</strain>
    </source>
</reference>
<gene>
    <name type="primary">let-4</name>
    <name type="synonym">sym-5</name>
    <name type="ORF">C44H4.2</name>
</gene>
<comment type="function">
    <text evidence="2">Required for apical extracellular matrix organization and epithelial junction maintenance.</text>
</comment>
<comment type="subcellular location">
    <subcellularLocation>
        <location evidence="2">Apical cell membrane</location>
        <topology evidence="2">Single-pass type I membrane protein</topology>
    </subcellularLocation>
    <text evidence="1 2">In the excretory canal cell at the 1.5-fold embryonic stage, localized uniformly at the cell membrane.</text>
</comment>
<comment type="tissue specificity">
    <text evidence="2">In L1 larvae, expressed in a subset of epithelial cells including epidermal, vulval and rectal cells and the excretory duct and pore. Absent from internal epithelia such as the gut and pharyngeal tubes. Transiently expressed in the excretory canal cell at the 1.5-fold embryonic stage but no longer visible in this cell at hatching.</text>
</comment>
<comment type="developmental stage">
    <text evidence="2">Expression begins around the ventral closure stage of embryogenesis, continues throughout larval development and decreases in adulthood.</text>
</comment>
<comment type="disruption phenotype">
    <text evidence="2">Highly lethal at L1 larval stage due to excretory defects. A small percentage of mutants die as embryos and a very small number survive to adulthood and are fertile but have defects in locomotion and egg-laying. There is no maternal effect on lethality.</text>
</comment>
<proteinExistence type="evidence at transcript level"/>